<gene>
    <name evidence="1" type="primary">rplQ</name>
    <name evidence="1" type="synonym">rpl17</name>
    <name type="ordered locus">Pro_1688</name>
</gene>
<organism>
    <name type="scientific">Prochlorococcus marinus (strain SARG / CCMP1375 / SS120)</name>
    <dbReference type="NCBI Taxonomy" id="167539"/>
    <lineage>
        <taxon>Bacteria</taxon>
        <taxon>Bacillati</taxon>
        <taxon>Cyanobacteriota</taxon>
        <taxon>Cyanophyceae</taxon>
        <taxon>Synechococcales</taxon>
        <taxon>Prochlorococcaceae</taxon>
        <taxon>Prochlorococcus</taxon>
    </lineage>
</organism>
<evidence type="ECO:0000255" key="1">
    <source>
        <dbReference type="HAMAP-Rule" id="MF_01368"/>
    </source>
</evidence>
<evidence type="ECO:0000305" key="2"/>
<feature type="chain" id="PRO_0000267912" description="Large ribosomal subunit protein bL17">
    <location>
        <begin position="1"/>
        <end position="116"/>
    </location>
</feature>
<sequence length="116" mass="13298">MRHQLRVPQLGRPADQRKALLRGLTTQLIREGRVTTTKTRAKALRDEVERMIGLAKDGSLAARRRAIGYIYDKKLVHSLFEKAQERYGDRQGGYTRIVRTVPRRGDNAEMAIIELV</sequence>
<proteinExistence type="inferred from homology"/>
<protein>
    <recommendedName>
        <fullName evidence="1">Large ribosomal subunit protein bL17</fullName>
    </recommendedName>
    <alternativeName>
        <fullName evidence="2">50S ribosomal protein L17</fullName>
    </alternativeName>
</protein>
<comment type="subunit">
    <text evidence="1">Part of the 50S ribosomal subunit. Contacts protein L32.</text>
</comment>
<comment type="similarity">
    <text evidence="1">Belongs to the bacterial ribosomal protein bL17 family.</text>
</comment>
<keyword id="KW-1185">Reference proteome</keyword>
<keyword id="KW-0687">Ribonucleoprotein</keyword>
<keyword id="KW-0689">Ribosomal protein</keyword>
<name>RL17_PROMA</name>
<accession>Q7V9Y6</accession>
<reference key="1">
    <citation type="journal article" date="2003" name="Proc. Natl. Acad. Sci. U.S.A.">
        <title>Genome sequence of the cyanobacterium Prochlorococcus marinus SS120, a nearly minimal oxyphototrophic genome.</title>
        <authorList>
            <person name="Dufresne A."/>
            <person name="Salanoubat M."/>
            <person name="Partensky F."/>
            <person name="Artiguenave F."/>
            <person name="Axmann I.M."/>
            <person name="Barbe V."/>
            <person name="Duprat S."/>
            <person name="Galperin M.Y."/>
            <person name="Koonin E.V."/>
            <person name="Le Gall F."/>
            <person name="Makarova K.S."/>
            <person name="Ostrowski M."/>
            <person name="Oztas S."/>
            <person name="Robert C."/>
            <person name="Rogozin I.B."/>
            <person name="Scanlan D.J."/>
            <person name="Tandeau de Marsac N."/>
            <person name="Weissenbach J."/>
            <person name="Wincker P."/>
            <person name="Wolf Y.I."/>
            <person name="Hess W.R."/>
        </authorList>
    </citation>
    <scope>NUCLEOTIDE SEQUENCE [LARGE SCALE GENOMIC DNA]</scope>
    <source>
        <strain>SARG / CCMP1375 / SS120</strain>
    </source>
</reference>
<dbReference type="EMBL" id="AE017126">
    <property type="protein sequence ID" value="AAQ00732.1"/>
    <property type="molecule type" value="Genomic_DNA"/>
</dbReference>
<dbReference type="RefSeq" id="NP_876079.1">
    <property type="nucleotide sequence ID" value="NC_005042.1"/>
</dbReference>
<dbReference type="RefSeq" id="WP_011125837.1">
    <property type="nucleotide sequence ID" value="NC_005042.1"/>
</dbReference>
<dbReference type="SMR" id="Q7V9Y6"/>
<dbReference type="STRING" id="167539.Pro_1688"/>
<dbReference type="EnsemblBacteria" id="AAQ00732">
    <property type="protein sequence ID" value="AAQ00732"/>
    <property type="gene ID" value="Pro_1688"/>
</dbReference>
<dbReference type="KEGG" id="pma:Pro_1688"/>
<dbReference type="PATRIC" id="fig|167539.5.peg.1782"/>
<dbReference type="eggNOG" id="COG0203">
    <property type="taxonomic scope" value="Bacteria"/>
</dbReference>
<dbReference type="HOGENOM" id="CLU_074407_2_2_3"/>
<dbReference type="OrthoDB" id="9809073at2"/>
<dbReference type="Proteomes" id="UP000001420">
    <property type="component" value="Chromosome"/>
</dbReference>
<dbReference type="GO" id="GO:0022625">
    <property type="term" value="C:cytosolic large ribosomal subunit"/>
    <property type="evidence" value="ECO:0007669"/>
    <property type="project" value="TreeGrafter"/>
</dbReference>
<dbReference type="GO" id="GO:0003735">
    <property type="term" value="F:structural constituent of ribosome"/>
    <property type="evidence" value="ECO:0007669"/>
    <property type="project" value="InterPro"/>
</dbReference>
<dbReference type="GO" id="GO:0006412">
    <property type="term" value="P:translation"/>
    <property type="evidence" value="ECO:0007669"/>
    <property type="project" value="UniProtKB-UniRule"/>
</dbReference>
<dbReference type="FunFam" id="3.90.1030.10:FF:000001">
    <property type="entry name" value="50S ribosomal protein L17"/>
    <property type="match status" value="1"/>
</dbReference>
<dbReference type="Gene3D" id="3.90.1030.10">
    <property type="entry name" value="Ribosomal protein L17"/>
    <property type="match status" value="1"/>
</dbReference>
<dbReference type="HAMAP" id="MF_01368">
    <property type="entry name" value="Ribosomal_bL17"/>
    <property type="match status" value="1"/>
</dbReference>
<dbReference type="InterPro" id="IPR000456">
    <property type="entry name" value="Ribosomal_bL17"/>
</dbReference>
<dbReference type="InterPro" id="IPR036373">
    <property type="entry name" value="Ribosomal_bL17_sf"/>
</dbReference>
<dbReference type="NCBIfam" id="TIGR00059">
    <property type="entry name" value="L17"/>
    <property type="match status" value="1"/>
</dbReference>
<dbReference type="PANTHER" id="PTHR14413:SF16">
    <property type="entry name" value="LARGE RIBOSOMAL SUBUNIT PROTEIN BL17M"/>
    <property type="match status" value="1"/>
</dbReference>
<dbReference type="PANTHER" id="PTHR14413">
    <property type="entry name" value="RIBOSOMAL PROTEIN L17"/>
    <property type="match status" value="1"/>
</dbReference>
<dbReference type="Pfam" id="PF01196">
    <property type="entry name" value="Ribosomal_L17"/>
    <property type="match status" value="1"/>
</dbReference>
<dbReference type="SUPFAM" id="SSF64263">
    <property type="entry name" value="Prokaryotic ribosomal protein L17"/>
    <property type="match status" value="1"/>
</dbReference>